<name>PSBI_ARATH</name>
<proteinExistence type="evidence at protein level"/>
<dbReference type="EMBL" id="AP000423">
    <property type="protein sequence ID" value="BAA84369.1"/>
    <property type="molecule type" value="Genomic_DNA"/>
</dbReference>
<dbReference type="RefSeq" id="NP_051043.1">
    <property type="nucleotide sequence ID" value="NC_000932.1"/>
</dbReference>
<dbReference type="PDB" id="5MDX">
    <property type="method" value="EM"/>
    <property type="resolution" value="5.30 A"/>
    <property type="chains" value="I/i=1-36"/>
</dbReference>
<dbReference type="PDB" id="7OUI">
    <property type="method" value="EM"/>
    <property type="resolution" value="2.79 A"/>
    <property type="chains" value="I/i=1-36"/>
</dbReference>
<dbReference type="PDBsum" id="5MDX"/>
<dbReference type="PDBsum" id="7OUI"/>
<dbReference type="EMDB" id="EMD-13078"/>
<dbReference type="EMDB" id="EMD-3491"/>
<dbReference type="SMR" id="P62100"/>
<dbReference type="FunCoup" id="P62100">
    <property type="interactions" value="46"/>
</dbReference>
<dbReference type="IntAct" id="P62100">
    <property type="interactions" value="1"/>
</dbReference>
<dbReference type="STRING" id="3702.P62100"/>
<dbReference type="TCDB" id="3.E.2.2.3">
    <property type="family name" value="the photosynthetic reaction center (prc) family"/>
</dbReference>
<dbReference type="PaxDb" id="3702-ATCG00080.1"/>
<dbReference type="EnsemblPlants" id="ATCG00080.1">
    <property type="protein sequence ID" value="ATCG00080.1"/>
    <property type="gene ID" value="ATCG00080"/>
</dbReference>
<dbReference type="GeneID" id="844794"/>
<dbReference type="Gramene" id="ATCG00080.1">
    <property type="protein sequence ID" value="ATCG00080.1"/>
    <property type="gene ID" value="ATCG00080"/>
</dbReference>
<dbReference type="KEGG" id="ath:ArthCp006"/>
<dbReference type="Araport" id="ATCG00080"/>
<dbReference type="TAIR" id="ATCG00080">
    <property type="gene designation" value="PSBI"/>
</dbReference>
<dbReference type="eggNOG" id="ENOG502SEUZ">
    <property type="taxonomic scope" value="Eukaryota"/>
</dbReference>
<dbReference type="HOGENOM" id="CLU_212150_0_0_1"/>
<dbReference type="InParanoid" id="P62100"/>
<dbReference type="BioCyc" id="MetaCyc:ATCG00080-MONOMER"/>
<dbReference type="PRO" id="PR:P62100"/>
<dbReference type="Proteomes" id="UP000006548">
    <property type="component" value="Chloroplast Pltd"/>
</dbReference>
<dbReference type="ExpressionAtlas" id="P62100">
    <property type="expression patterns" value="baseline and differential"/>
</dbReference>
<dbReference type="GO" id="GO:0009535">
    <property type="term" value="C:chloroplast thylakoid membrane"/>
    <property type="evidence" value="ECO:0007669"/>
    <property type="project" value="UniProtKB-SubCell"/>
</dbReference>
<dbReference type="GO" id="GO:0009539">
    <property type="term" value="C:photosystem II reaction center"/>
    <property type="evidence" value="ECO:0007669"/>
    <property type="project" value="InterPro"/>
</dbReference>
<dbReference type="GO" id="GO:0015979">
    <property type="term" value="P:photosynthesis"/>
    <property type="evidence" value="ECO:0007669"/>
    <property type="project" value="UniProtKB-UniRule"/>
</dbReference>
<dbReference type="HAMAP" id="MF_01316">
    <property type="entry name" value="PSII_PsbI"/>
    <property type="match status" value="1"/>
</dbReference>
<dbReference type="InterPro" id="IPR003686">
    <property type="entry name" value="PSII_PsbI"/>
</dbReference>
<dbReference type="InterPro" id="IPR037271">
    <property type="entry name" value="PSII_PsbI_sf"/>
</dbReference>
<dbReference type="NCBIfam" id="NF002735">
    <property type="entry name" value="PRK02655.1"/>
    <property type="match status" value="1"/>
</dbReference>
<dbReference type="PANTHER" id="PTHR35772">
    <property type="entry name" value="PHOTOSYSTEM II REACTION CENTER PROTEIN I"/>
    <property type="match status" value="1"/>
</dbReference>
<dbReference type="PANTHER" id="PTHR35772:SF1">
    <property type="entry name" value="PHOTOSYSTEM II REACTION CENTER PROTEIN I"/>
    <property type="match status" value="1"/>
</dbReference>
<dbReference type="Pfam" id="PF02532">
    <property type="entry name" value="PsbI"/>
    <property type="match status" value="1"/>
</dbReference>
<dbReference type="SUPFAM" id="SSF161041">
    <property type="entry name" value="Photosystem II reaction center protein I, PsbI"/>
    <property type="match status" value="1"/>
</dbReference>
<accession>P62100</accession>
<accession>P09970</accession>
<reference key="1">
    <citation type="journal article" date="1999" name="DNA Res.">
        <title>Complete structure of the chloroplast genome of Arabidopsis thaliana.</title>
        <authorList>
            <person name="Sato S."/>
            <person name="Nakamura Y."/>
            <person name="Kaneko T."/>
            <person name="Asamizu E."/>
            <person name="Tabata S."/>
        </authorList>
    </citation>
    <scope>NUCLEOTIDE SEQUENCE [LARGE SCALE GENOMIC DNA]</scope>
    <source>
        <strain>cv. Columbia</strain>
    </source>
</reference>
<reference key="2">
    <citation type="journal article" date="2010" name="Plant Cell">
        <title>The Arabidopsis thylakoid protein PAM68 is required for efficient D1 biogenesis and photosystem II assembly.</title>
        <authorList>
            <person name="Armbruster U."/>
            <person name="Zuhlke J."/>
            <person name="Rengstl B."/>
            <person name="Kreller R."/>
            <person name="Makarenko E."/>
            <person name="Ruhle T."/>
            <person name="Schunemann D."/>
            <person name="Jahns P."/>
            <person name="Weisshaar B."/>
            <person name="Nickelsen J."/>
            <person name="Leister D."/>
        </authorList>
    </citation>
    <scope>INTERACTION WITH PAM68</scope>
</reference>
<keyword id="KW-0002">3D-structure</keyword>
<keyword id="KW-0150">Chloroplast</keyword>
<keyword id="KW-0472">Membrane</keyword>
<keyword id="KW-0602">Photosynthesis</keyword>
<keyword id="KW-0604">Photosystem II</keyword>
<keyword id="KW-0934">Plastid</keyword>
<keyword id="KW-0674">Reaction center</keyword>
<keyword id="KW-1185">Reference proteome</keyword>
<keyword id="KW-0793">Thylakoid</keyword>
<keyword id="KW-0812">Transmembrane</keyword>
<keyword id="KW-1133">Transmembrane helix</keyword>
<comment type="function">
    <text evidence="1">One of the components of the core complex of photosystem II (PSII), required for its stability and/or assembly. PSII is a light-driven water:plastoquinone oxidoreductase that uses light energy to abstract electrons from H(2)O, generating O(2) and a proton gradient subsequently used for ATP formation. It consists of a core antenna complex that captures photons, and an electron transfer chain that converts photonic excitation into a charge separation.</text>
</comment>
<comment type="subunit">
    <text evidence="1 2">PSII is composed of 1 copy each of membrane proteins PsbA, PsbB, PsbC, PsbD, PsbE, PsbF, PsbH, PsbI, PsbJ, PsbK, PsbL, PsbM, PsbT, PsbX, PsbY, PsbZ, Psb30/Ycf12, at least 3 peripheral proteins of the oxygen-evolving complex and a large number of cofactors. It forms dimeric complexes. Interacts with PAM68 (PubMed:20923938).</text>
</comment>
<comment type="subcellular location">
    <subcellularLocation>
        <location evidence="1">Plastid</location>
        <location evidence="1">Chloroplast thylakoid membrane</location>
        <topology evidence="1">Single-pass membrane protein</topology>
    </subcellularLocation>
</comment>
<comment type="similarity">
    <text evidence="1">Belongs to the PsbI family.</text>
</comment>
<organism>
    <name type="scientific">Arabidopsis thaliana</name>
    <name type="common">Mouse-ear cress</name>
    <dbReference type="NCBI Taxonomy" id="3702"/>
    <lineage>
        <taxon>Eukaryota</taxon>
        <taxon>Viridiplantae</taxon>
        <taxon>Streptophyta</taxon>
        <taxon>Embryophyta</taxon>
        <taxon>Tracheophyta</taxon>
        <taxon>Spermatophyta</taxon>
        <taxon>Magnoliopsida</taxon>
        <taxon>eudicotyledons</taxon>
        <taxon>Gunneridae</taxon>
        <taxon>Pentapetalae</taxon>
        <taxon>rosids</taxon>
        <taxon>malvids</taxon>
        <taxon>Brassicales</taxon>
        <taxon>Brassicaceae</taxon>
        <taxon>Camelineae</taxon>
        <taxon>Arabidopsis</taxon>
    </lineage>
</organism>
<sequence length="36" mass="4168">MLTLKLFVYTVVIFFVSLFIFGFLSNDPGRNPGREE</sequence>
<gene>
    <name evidence="1" type="primary">psbI</name>
    <name type="ordered locus">AtCg00080</name>
</gene>
<geneLocation type="chloroplast"/>
<protein>
    <recommendedName>
        <fullName evidence="1">Photosystem II reaction center protein I</fullName>
        <shortName evidence="1">PSII-I</shortName>
    </recommendedName>
    <alternativeName>
        <fullName evidence="1">PSII 4.8 kDa protein</fullName>
    </alternativeName>
</protein>
<evidence type="ECO:0000255" key="1">
    <source>
        <dbReference type="HAMAP-Rule" id="MF_01316"/>
    </source>
</evidence>
<evidence type="ECO:0000269" key="2">
    <source>
    </source>
</evidence>
<evidence type="ECO:0007829" key="3">
    <source>
        <dbReference type="PDB" id="7OUI"/>
    </source>
</evidence>
<feature type="chain" id="PRO_0000219617" description="Photosystem II reaction center protein I">
    <location>
        <begin position="1"/>
        <end position="36"/>
    </location>
</feature>
<feature type="transmembrane region" description="Helical" evidence="1">
    <location>
        <begin position="4"/>
        <end position="24"/>
    </location>
</feature>
<feature type="helix" evidence="3">
    <location>
        <begin position="2"/>
        <end position="23"/>
    </location>
</feature>
<feature type="turn" evidence="3">
    <location>
        <begin position="24"/>
        <end position="26"/>
    </location>
</feature>